<accession>P75356</accession>
<keyword id="KW-0067">ATP-binding</keyword>
<keyword id="KW-0547">Nucleotide-binding</keyword>
<keyword id="KW-1185">Reference proteome</keyword>
<keyword id="KW-0813">Transport</keyword>
<proteinExistence type="inferred from homology"/>
<comment type="similarity">
    <text evidence="2">Belongs to the ABC transporter superfamily.</text>
</comment>
<comment type="sequence caution" evidence="2">
    <conflict type="erroneous initiation">
        <sequence resource="EMBL-CDS" id="AAB96057"/>
    </conflict>
</comment>
<name>Y432_MYCPN</name>
<evidence type="ECO:0000255" key="1">
    <source>
        <dbReference type="PROSITE-ProRule" id="PRU00434"/>
    </source>
</evidence>
<evidence type="ECO:0000305" key="2"/>
<organism>
    <name type="scientific">Mycoplasma pneumoniae (strain ATCC 29342 / M129 / Subtype 1)</name>
    <name type="common">Mycoplasmoides pneumoniae</name>
    <dbReference type="NCBI Taxonomy" id="272634"/>
    <lineage>
        <taxon>Bacteria</taxon>
        <taxon>Bacillati</taxon>
        <taxon>Mycoplasmatota</taxon>
        <taxon>Mycoplasmoidales</taxon>
        <taxon>Mycoplasmoidaceae</taxon>
        <taxon>Mycoplasmoides</taxon>
    </lineage>
</organism>
<reference key="1">
    <citation type="journal article" date="1996" name="Nucleic Acids Res.">
        <title>Complete sequence analysis of the genome of the bacterium Mycoplasma pneumoniae.</title>
        <authorList>
            <person name="Himmelreich R."/>
            <person name="Hilbert H."/>
            <person name="Plagens H."/>
            <person name="Pirkl E."/>
            <person name="Li B.-C."/>
            <person name="Herrmann R."/>
        </authorList>
    </citation>
    <scope>NUCLEOTIDE SEQUENCE [LARGE SCALE GENOMIC DNA]</scope>
    <source>
        <strain>ATCC 29342 / M129 / Subtype 1</strain>
    </source>
</reference>
<sequence>MQTPQIIWSLIAPQYRGLANKVNRKLIQSSIKHYFWYCKQFDKLVHPFYYLTAKKHTPLFNQQLVDLAQSTLYFYNLSVFVDKSNAGQIIKNVTGSVEPNQITVIFGPSGSGKTTLIKQLGLVENPTCGFLNCGNFYYFANQKHNRATKQFQNSIGYVLQKAEEQFLCDSVLEEVLTGAINLGLCQKGDVNFAKKYLEMCGLHHIPLIKNPLELSGGQKKRLALASVLAMQVQFLILDEPTVGLDQEGKALKSALLKQLKQVTRIMIVSHDVDFIYETADSLIQLEAGQIVDQMSVADFFNNMQLLQRYEITPPLVVQTIQLLQAKGVQLNDPLAIKTVHDLIDQLKPLFHDQ</sequence>
<dbReference type="EMBL" id="U00089">
    <property type="protein sequence ID" value="AAB96057.1"/>
    <property type="status" value="ALT_INIT"/>
    <property type="molecule type" value="Genomic_DNA"/>
</dbReference>
<dbReference type="PIR" id="S73735">
    <property type="entry name" value="S73735"/>
</dbReference>
<dbReference type="RefSeq" id="NP_110120.1">
    <property type="nucleotide sequence ID" value="NC_000912.1"/>
</dbReference>
<dbReference type="RefSeq" id="WP_193329302.1">
    <property type="nucleotide sequence ID" value="NC_000912.1"/>
</dbReference>
<dbReference type="SMR" id="P75356"/>
<dbReference type="STRING" id="272634.MPN_432"/>
<dbReference type="EnsemblBacteria" id="AAB96057">
    <property type="protein sequence ID" value="AAB96057"/>
    <property type="gene ID" value="MPN_432"/>
</dbReference>
<dbReference type="KEGG" id="mpn:MPN_432"/>
<dbReference type="PATRIC" id="fig|272634.6.peg.467"/>
<dbReference type="HOGENOM" id="CLU_000604_1_22_14"/>
<dbReference type="OrthoDB" id="9784332at2"/>
<dbReference type="Proteomes" id="UP000000808">
    <property type="component" value="Chromosome"/>
</dbReference>
<dbReference type="GO" id="GO:0043190">
    <property type="term" value="C:ATP-binding cassette (ABC) transporter complex"/>
    <property type="evidence" value="ECO:0007669"/>
    <property type="project" value="TreeGrafter"/>
</dbReference>
<dbReference type="GO" id="GO:0005524">
    <property type="term" value="F:ATP binding"/>
    <property type="evidence" value="ECO:0007669"/>
    <property type="project" value="UniProtKB-KW"/>
</dbReference>
<dbReference type="GO" id="GO:0016887">
    <property type="term" value="F:ATP hydrolysis activity"/>
    <property type="evidence" value="ECO:0007669"/>
    <property type="project" value="InterPro"/>
</dbReference>
<dbReference type="GO" id="GO:0042626">
    <property type="term" value="F:ATPase-coupled transmembrane transporter activity"/>
    <property type="evidence" value="ECO:0007669"/>
    <property type="project" value="TreeGrafter"/>
</dbReference>
<dbReference type="CDD" id="cd03225">
    <property type="entry name" value="ABC_cobalt_CbiO_domain1"/>
    <property type="match status" value="1"/>
</dbReference>
<dbReference type="Gene3D" id="3.40.50.300">
    <property type="entry name" value="P-loop containing nucleotide triphosphate hydrolases"/>
    <property type="match status" value="1"/>
</dbReference>
<dbReference type="InterPro" id="IPR003593">
    <property type="entry name" value="AAA+_ATPase"/>
</dbReference>
<dbReference type="InterPro" id="IPR003439">
    <property type="entry name" value="ABC_transporter-like_ATP-bd"/>
</dbReference>
<dbReference type="InterPro" id="IPR017871">
    <property type="entry name" value="ABC_transporter-like_CS"/>
</dbReference>
<dbReference type="InterPro" id="IPR015856">
    <property type="entry name" value="ABC_transpr_CbiO/EcfA_su"/>
</dbReference>
<dbReference type="InterPro" id="IPR050095">
    <property type="entry name" value="ECF_ABC_transporter_ATP-bd"/>
</dbReference>
<dbReference type="InterPro" id="IPR027417">
    <property type="entry name" value="P-loop_NTPase"/>
</dbReference>
<dbReference type="PANTHER" id="PTHR43553:SF24">
    <property type="entry name" value="ENERGY-COUPLING FACTOR TRANSPORTER ATP-BINDING PROTEIN ECFA1"/>
    <property type="match status" value="1"/>
</dbReference>
<dbReference type="PANTHER" id="PTHR43553">
    <property type="entry name" value="HEAVY METAL TRANSPORTER"/>
    <property type="match status" value="1"/>
</dbReference>
<dbReference type="Pfam" id="PF00005">
    <property type="entry name" value="ABC_tran"/>
    <property type="match status" value="1"/>
</dbReference>
<dbReference type="SMART" id="SM00382">
    <property type="entry name" value="AAA"/>
    <property type="match status" value="1"/>
</dbReference>
<dbReference type="SUPFAM" id="SSF52540">
    <property type="entry name" value="P-loop containing nucleoside triphosphate hydrolases"/>
    <property type="match status" value="1"/>
</dbReference>
<dbReference type="PROSITE" id="PS00211">
    <property type="entry name" value="ABC_TRANSPORTER_1"/>
    <property type="match status" value="1"/>
</dbReference>
<dbReference type="PROSITE" id="PS50893">
    <property type="entry name" value="ABC_TRANSPORTER_2"/>
    <property type="match status" value="1"/>
</dbReference>
<gene>
    <name type="ordered locus">MPN_432</name>
    <name type="ORF">A05_orf382</name>
    <name type="ORF">MP409</name>
</gene>
<protein>
    <recommendedName>
        <fullName>Putative ABC transporter ATP-binding protein MG303 homolog</fullName>
    </recommendedName>
</protein>
<feature type="chain" id="PRO_0000093244" description="Putative ABC transporter ATP-binding protein MG303 homolog">
    <location>
        <begin position="1"/>
        <end position="353"/>
    </location>
</feature>
<feature type="domain" description="ABC transporter" evidence="1">
    <location>
        <begin position="72"/>
        <end position="312"/>
    </location>
</feature>
<feature type="binding site" evidence="1">
    <location>
        <begin position="107"/>
        <end position="114"/>
    </location>
    <ligand>
        <name>ATP</name>
        <dbReference type="ChEBI" id="CHEBI:30616"/>
    </ligand>
</feature>